<protein>
    <recommendedName>
        <fullName>Lysine--tRNA ligase</fullName>
        <ecNumber>6.1.1.6</ecNumber>
    </recommendedName>
    <alternativeName>
        <fullName>Lysyl-tRNA synthetase</fullName>
        <shortName>LysRS</shortName>
    </alternativeName>
</protein>
<gene>
    <name type="primary">lysS</name>
    <name type="ordered locus">BB_0659</name>
</gene>
<keyword id="KW-0030">Aminoacyl-tRNA synthetase</keyword>
<keyword id="KW-0067">ATP-binding</keyword>
<keyword id="KW-0963">Cytoplasm</keyword>
<keyword id="KW-0436">Ligase</keyword>
<keyword id="KW-0547">Nucleotide-binding</keyword>
<keyword id="KW-0648">Protein biosynthesis</keyword>
<keyword id="KW-1185">Reference proteome</keyword>
<comment type="catalytic activity">
    <reaction>
        <text>tRNA(Lys) + L-lysine + ATP = L-lysyl-tRNA(Lys) + AMP + diphosphate</text>
        <dbReference type="Rhea" id="RHEA:20792"/>
        <dbReference type="Rhea" id="RHEA-COMP:9696"/>
        <dbReference type="Rhea" id="RHEA-COMP:9697"/>
        <dbReference type="ChEBI" id="CHEBI:30616"/>
        <dbReference type="ChEBI" id="CHEBI:32551"/>
        <dbReference type="ChEBI" id="CHEBI:33019"/>
        <dbReference type="ChEBI" id="CHEBI:78442"/>
        <dbReference type="ChEBI" id="CHEBI:78529"/>
        <dbReference type="ChEBI" id="CHEBI:456215"/>
        <dbReference type="EC" id="6.1.1.6"/>
    </reaction>
</comment>
<comment type="subcellular location">
    <subcellularLocation>
        <location>Cytoplasm</location>
    </subcellularLocation>
</comment>
<comment type="miscellaneous">
    <text>Able to charge E.coli tRNA(Lys) in vitro.</text>
</comment>
<comment type="similarity">
    <text evidence="1">Belongs to the class-I aminoacyl-tRNA synthetase family.</text>
</comment>
<name>SYK_BORBU</name>
<feature type="chain" id="PRO_0000152736" description="Lysine--tRNA ligase">
    <location>
        <begin position="1"/>
        <end position="521"/>
    </location>
</feature>
<feature type="short sequence motif" description="'HIGH' region">
    <location>
        <begin position="32"/>
        <end position="40"/>
    </location>
</feature>
<feature type="short sequence motif" description="'KMSKS' region">
    <location>
        <begin position="280"/>
        <end position="284"/>
    </location>
</feature>
<sequence length="521" mass="60938">MKTAHWADFYAEKIKKEKGPKNLYTVASGITPSGTVHIGNFREVISVDLVARALRDSGSKVRFIYSWDNYDVFRKVPKNMPEQELLTTYLRQAITRVPDTRSHKTSYARANEIEFEKYLPVVGINPEFIDQSKQYTSNAYASQIKFALDHKKELSEALNEYRTSKLEENWYPISVFCTKCNRDTTTVNNYDNHYSVEYSCECGNQESLDIRTTWAIKLPWRIDWPMRWKYEKVDFEPAGKDHHSSGGSFDTSKNIVKIFQGSPPVTFQYDFISIKGRGGKISSSSGDVISLKDVLEVYTPEVTRFLFAATKPNTEFSISFDLDVIKIYEDYDKFERIYYGVEDVKEEKKRAFKRIYELSQPYMPSKRIPYQVGFRHLSVISQIFENNINKILNYLKNVQEDQKDKLINKINCAINWIRDFAPEDFKFSLRSKFDNMEILEENSKKAINELLDFLKKNFEVATEQDIQNEIYKISRENNIEPALFFKQIYKILIDKEKGPKLAGFIKIIGIDRFEKITSKYV</sequence>
<evidence type="ECO:0000305" key="1"/>
<dbReference type="EC" id="6.1.1.6"/>
<dbReference type="EMBL" id="AE000783">
    <property type="protein sequence ID" value="AAC67006.1"/>
    <property type="molecule type" value="Genomic_DNA"/>
</dbReference>
<dbReference type="PIR" id="B70182">
    <property type="entry name" value="B70182"/>
</dbReference>
<dbReference type="RefSeq" id="NP_212793.1">
    <property type="nucleotide sequence ID" value="NC_001318.1"/>
</dbReference>
<dbReference type="RefSeq" id="WP_002663481.1">
    <property type="nucleotide sequence ID" value="NC_001318.1"/>
</dbReference>
<dbReference type="SMR" id="O51603"/>
<dbReference type="STRING" id="224326.BB_0659"/>
<dbReference type="PaxDb" id="224326-BB_0659"/>
<dbReference type="EnsemblBacteria" id="AAC67006">
    <property type="protein sequence ID" value="AAC67006"/>
    <property type="gene ID" value="BB_0659"/>
</dbReference>
<dbReference type="KEGG" id="bbu:BB_0659"/>
<dbReference type="PATRIC" id="fig|224326.49.peg.1050"/>
<dbReference type="HOGENOM" id="CLU_025562_1_0_12"/>
<dbReference type="OrthoDB" id="9803151at2"/>
<dbReference type="Proteomes" id="UP000001807">
    <property type="component" value="Chromosome"/>
</dbReference>
<dbReference type="GO" id="GO:0005829">
    <property type="term" value="C:cytosol"/>
    <property type="evidence" value="ECO:0000314"/>
    <property type="project" value="CAFA"/>
</dbReference>
<dbReference type="GO" id="GO:0005524">
    <property type="term" value="F:ATP binding"/>
    <property type="evidence" value="ECO:0007669"/>
    <property type="project" value="UniProtKB-UniRule"/>
</dbReference>
<dbReference type="GO" id="GO:0004824">
    <property type="term" value="F:lysine-tRNA ligase activity"/>
    <property type="evidence" value="ECO:0007669"/>
    <property type="project" value="UniProtKB-UniRule"/>
</dbReference>
<dbReference type="GO" id="GO:0000049">
    <property type="term" value="F:tRNA binding"/>
    <property type="evidence" value="ECO:0007669"/>
    <property type="project" value="InterPro"/>
</dbReference>
<dbReference type="GO" id="GO:0006430">
    <property type="term" value="P:lysyl-tRNA aminoacylation"/>
    <property type="evidence" value="ECO:0007669"/>
    <property type="project" value="UniProtKB-UniRule"/>
</dbReference>
<dbReference type="CDD" id="cd00674">
    <property type="entry name" value="LysRS_core_class_I"/>
    <property type="match status" value="1"/>
</dbReference>
<dbReference type="Gene3D" id="1.10.10.350">
    <property type="match status" value="1"/>
</dbReference>
<dbReference type="Gene3D" id="1.10.10.770">
    <property type="match status" value="1"/>
</dbReference>
<dbReference type="Gene3D" id="3.40.50.620">
    <property type="entry name" value="HUPs"/>
    <property type="match status" value="2"/>
</dbReference>
<dbReference type="Gene3D" id="6.10.20.10">
    <property type="entry name" value="Lysine tRNA ligase, stem contact fold domain"/>
    <property type="match status" value="1"/>
</dbReference>
<dbReference type="HAMAP" id="MF_00177">
    <property type="entry name" value="Lys_tRNA_synth_class1"/>
    <property type="match status" value="1"/>
</dbReference>
<dbReference type="InterPro" id="IPR020751">
    <property type="entry name" value="aa-tRNA-synth_I_codon-bd_sub2"/>
</dbReference>
<dbReference type="InterPro" id="IPR001412">
    <property type="entry name" value="aa-tRNA-synth_I_CS"/>
</dbReference>
<dbReference type="InterPro" id="IPR008925">
    <property type="entry name" value="aa_tRNA-synth_I_cd-bd_sf"/>
</dbReference>
<dbReference type="InterPro" id="IPR002904">
    <property type="entry name" value="Lys-tRNA-ligase"/>
</dbReference>
<dbReference type="InterPro" id="IPR042078">
    <property type="entry name" value="Lys-tRNA-ligase_SC_fold"/>
</dbReference>
<dbReference type="InterPro" id="IPR014729">
    <property type="entry name" value="Rossmann-like_a/b/a_fold"/>
</dbReference>
<dbReference type="NCBIfam" id="TIGR00467">
    <property type="entry name" value="lysS_arch"/>
    <property type="match status" value="1"/>
</dbReference>
<dbReference type="PANTHER" id="PTHR37940">
    <property type="entry name" value="LYSINE--TRNA LIGASE"/>
    <property type="match status" value="1"/>
</dbReference>
<dbReference type="PANTHER" id="PTHR37940:SF1">
    <property type="entry name" value="LYSINE--TRNA LIGASE"/>
    <property type="match status" value="1"/>
</dbReference>
<dbReference type="Pfam" id="PF01921">
    <property type="entry name" value="tRNA-synt_1f"/>
    <property type="match status" value="1"/>
</dbReference>
<dbReference type="SUPFAM" id="SSF48163">
    <property type="entry name" value="An anticodon-binding domain of class I aminoacyl-tRNA synthetases"/>
    <property type="match status" value="1"/>
</dbReference>
<dbReference type="SUPFAM" id="SSF52374">
    <property type="entry name" value="Nucleotidylyl transferase"/>
    <property type="match status" value="1"/>
</dbReference>
<dbReference type="PROSITE" id="PS00178">
    <property type="entry name" value="AA_TRNA_LIGASE_I"/>
    <property type="match status" value="1"/>
</dbReference>
<organism>
    <name type="scientific">Borreliella burgdorferi (strain ATCC 35210 / DSM 4680 / CIP 102532 / B31)</name>
    <name type="common">Borrelia burgdorferi</name>
    <dbReference type="NCBI Taxonomy" id="224326"/>
    <lineage>
        <taxon>Bacteria</taxon>
        <taxon>Pseudomonadati</taxon>
        <taxon>Spirochaetota</taxon>
        <taxon>Spirochaetia</taxon>
        <taxon>Spirochaetales</taxon>
        <taxon>Borreliaceae</taxon>
        <taxon>Borreliella</taxon>
    </lineage>
</organism>
<reference key="1">
    <citation type="journal article" date="1997" name="Nature">
        <title>Genomic sequence of a Lyme disease spirochaete, Borrelia burgdorferi.</title>
        <authorList>
            <person name="Fraser C.M."/>
            <person name="Casjens S."/>
            <person name="Huang W.M."/>
            <person name="Sutton G.G."/>
            <person name="Clayton R.A."/>
            <person name="Lathigra R."/>
            <person name="White O."/>
            <person name="Ketchum K.A."/>
            <person name="Dodson R.J."/>
            <person name="Hickey E.K."/>
            <person name="Gwinn M.L."/>
            <person name="Dougherty B.A."/>
            <person name="Tomb J.-F."/>
            <person name="Fleischmann R.D."/>
            <person name="Richardson D.L."/>
            <person name="Peterson J.D."/>
            <person name="Kerlavage A.R."/>
            <person name="Quackenbush J."/>
            <person name="Salzberg S.L."/>
            <person name="Hanson M."/>
            <person name="van Vugt R."/>
            <person name="Palmer N."/>
            <person name="Adams M.D."/>
            <person name="Gocayne J.D."/>
            <person name="Weidman J.F."/>
            <person name="Utterback T.R."/>
            <person name="Watthey L."/>
            <person name="McDonald L.A."/>
            <person name="Artiach P."/>
            <person name="Bowman C."/>
            <person name="Garland S.A."/>
            <person name="Fujii C."/>
            <person name="Cotton M.D."/>
            <person name="Horst K."/>
            <person name="Roberts K.M."/>
            <person name="Hatch B."/>
            <person name="Smith H.O."/>
            <person name="Venter J.C."/>
        </authorList>
    </citation>
    <scope>NUCLEOTIDE SEQUENCE [LARGE SCALE GENOMIC DNA]</scope>
    <source>
        <strain>ATCC 35210 / DSM 4680 / CIP 102532 / B31</strain>
    </source>
</reference>
<reference key="2">
    <citation type="journal article" date="1997" name="Proc. Natl. Acad. Sci. U.S.A.">
        <title>Archaeal-type lysyl-tRNA synthetase in the Lyme disease spirochete Borrelia burgdorferi.</title>
        <authorList>
            <person name="Ibba M."/>
            <person name="Bono J.L."/>
            <person name="Rosa P.A."/>
            <person name="Soell D."/>
        </authorList>
    </citation>
    <scope>CHARACTERIZATION</scope>
</reference>
<reference key="3">
    <citation type="journal article" date="2000" name="Proc. Natl. Acad. Sci. U.S.A.">
        <title>Context-dependent anticodon recognition by class I lysyl-tRNA synthetases.</title>
        <authorList>
            <person name="Soell D."/>
            <person name="Becker H.D."/>
            <person name="Plateau P."/>
            <person name="Blanquet S."/>
            <person name="Ibba M."/>
        </authorList>
    </citation>
    <scope>CHARACTERIZATION</scope>
</reference>
<proteinExistence type="evidence at protein level"/>
<accession>O51603</accession>